<comment type="function">
    <text evidence="1 3 5">Cyclopenase; part of the gene cluster that mediates the biosynthesis of the aspoquinolone mycotoxins (PubMed:25251934, PubMed:30026518). Within the pathway, the cyclopenase asqI catalyzes the conversion of 4'-methoxycyclopenin into 4'-methoxyviridicatin (PubMed:30026518). Cyclopenin can also be converted into viridicatin by asqI (PubMed:30026518). The first step of the pathway is catalyzed by the nonribosomal peptide synthetase asqK that condenses anthranilic acid and O-methyl-L-tyrosine to produce 4'-methoxycyclopeptin. 4'-methoxycyclopeptin is then converted to 4'-methoxydehydrocyclopeptin by the ketoglutarate-dependent dioxygenase asqJ. AsqJ also converts its first product 4'-methoxydehydrocyclopeptin to 4'-methoxycyclopenin. The following conversion of 4'-methoxycyclopenin into 4'-methoxyviridicatin is catalyzed by the cyclopenase asqI. 4'-methoxyviridicatin is the precursor of quinolone natural products, and is further converted to quinolinone B. The prenyltransferase asqH1 then catalyzes the canonical Friedel-Crafts alkylation of quinolinone B with dimethylallyl cation to yield dimethylallyl quinolone, which is subjected to FAD-dependent dehydrogenation by the FAD-linked oxidoreductase asqF to yield conjugated aryl diene. The delta(3') double bond then serves as the site of the second alkylation with DMAPP catalyzed by the prenyltransferase asqH2 to yield a carbenium ion intermediate, which can be attacked by H(2)O to yield a styrenyl quinolone containing a C3'-hydroxyprenyl chain. The FAD-dependent monooxygenase asqG performs epoxidation of the terminal C7'-C8' olefin. Finally, after dehydratation of the epoxide at C3 by asqC, the quinolone epoxide rearrangement protein asqO catalyzes an enzymatic 3-exo-tet cyclization to yield the cyclopropyl-THF ring system in aspoquinolone (Probable).</text>
</comment>
<comment type="catalytic activity">
    <reaction evidence="3">
        <text>(-)-cyclopenine = viridicatin + methyl isocyanate + H(+)</text>
        <dbReference type="Rhea" id="RHEA:73415"/>
        <dbReference type="ChEBI" id="CHEBI:15378"/>
        <dbReference type="ChEBI" id="CHEBI:59059"/>
        <dbReference type="ChEBI" id="CHEBI:193522"/>
        <dbReference type="ChEBI" id="CHEBI:193553"/>
        <dbReference type="EC" id="4.1.99.27"/>
    </reaction>
    <physiologicalReaction direction="left-to-right" evidence="3">
        <dbReference type="Rhea" id="RHEA:73416"/>
    </physiologicalReaction>
</comment>
<comment type="catalytic activity">
    <reaction evidence="3">
        <text>(-)-4'-methoxycyclopenine = 4'-methoxyviridicatin + methyl isocyanate + H(+)</text>
        <dbReference type="Rhea" id="RHEA:74463"/>
        <dbReference type="ChEBI" id="CHEBI:15378"/>
        <dbReference type="ChEBI" id="CHEBI:59059"/>
        <dbReference type="ChEBI" id="CHEBI:193535"/>
        <dbReference type="ChEBI" id="CHEBI:193536"/>
        <dbReference type="EC" id="4.1.99.27"/>
    </reaction>
    <physiologicalReaction direction="left-to-right" evidence="3">
        <dbReference type="Rhea" id="RHEA:74464"/>
    </physiologicalReaction>
</comment>
<comment type="cofactor">
    <cofactor evidence="3">
        <name>Zn(2+)</name>
        <dbReference type="ChEBI" id="CHEBI:29105"/>
    </cofactor>
    <text evidence="3">Binds 1 zinc ion per subunit.</text>
</comment>
<comment type="biophysicochemical properties">
    <kinetics>
        <KM evidence="3">0.068 mM for (-)-Cyclopeptin</KM>
        <KM evidence="3">2.86 mM for 4'-methoxycyclopenin</KM>
    </kinetics>
</comment>
<comment type="pathway">
    <text evidence="3">Secondary metabolite biosynthesis.</text>
</comment>
<comment type="pathway">
    <text evidence="3">Alkaloid biosynthesis.</text>
</comment>
<comment type="pathway">
    <text evidence="3">Mycotoxin biosynthesis.</text>
</comment>
<comment type="similarity">
    <text evidence="5">Belongs to the tyrosinase family.</text>
</comment>
<comment type="sequence caution" evidence="2">
    <conflict type="erroneous gene model prediction">
        <sequence resource="EMBL-CDS" id="EAA61519"/>
    </conflict>
    <text>The predicted gene AN9228 has been split into 2 genes: asqI and asqO.</text>
</comment>
<gene>
    <name evidence="4" type="primary">asqI</name>
    <name type="ORF">AN9228</name>
    <name type="ORF">ANIA_11193</name>
</gene>
<feature type="chain" id="PRO_0000437623" description="Cyclopenase asqI">
    <location>
        <begin position="1"/>
        <end position="732"/>
    </location>
</feature>
<feature type="binding site" evidence="3 6">
    <location>
        <position position="168"/>
    </location>
    <ligand>
        <name>Zn(2+)</name>
        <dbReference type="ChEBI" id="CHEBI:29105"/>
    </ligand>
</feature>
<feature type="binding site" evidence="3 6">
    <location>
        <position position="172"/>
    </location>
    <ligand>
        <name>Zn(2+)</name>
        <dbReference type="ChEBI" id="CHEBI:29105"/>
    </ligand>
</feature>
<feature type="binding site" evidence="3 6">
    <location>
        <position position="200"/>
    </location>
    <ligand>
        <name>Zn(2+)</name>
        <dbReference type="ChEBI" id="CHEBI:29105"/>
    </ligand>
</feature>
<feature type="mutagenesis site" description="Impairs the catalytic activity." evidence="3">
    <original>H</original>
    <variation>A</variation>
    <location>
        <position position="168"/>
    </location>
</feature>
<feature type="mutagenesis site" description="Impairs the catalytic activity." evidence="3">
    <original>H</original>
    <variation>A</variation>
    <location>
        <position position="172"/>
    </location>
</feature>
<feature type="mutagenesis site" description="Impairs the catalytic activity." evidence="3">
    <original>R</original>
    <variation>A</variation>
    <location>
        <position position="176"/>
    </location>
</feature>
<feature type="mutagenesis site" description="Impairs the catalytic activity." evidence="3">
    <original>H</original>
    <variation>A</variation>
    <location>
        <position position="200"/>
    </location>
</feature>
<feature type="mutagenesis site" description="Impairs the catalytic activity." evidence="3">
    <original>D</original>
    <variation>L</variation>
    <location>
        <position position="314"/>
    </location>
</feature>
<feature type="mutagenesis site" description="Does not affect the catalytic activity." evidence="3">
    <original>H</original>
    <variation>A</variation>
    <location>
        <position position="338"/>
    </location>
</feature>
<feature type="mutagenesis site" description="Impairs the catalytic activity." evidence="3">
    <original>N</original>
    <variation>L</variation>
    <location>
        <position position="339"/>
    </location>
</feature>
<feature type="helix" evidence="9">
    <location>
        <begin position="35"/>
        <end position="43"/>
    </location>
</feature>
<feature type="helix" evidence="9">
    <location>
        <begin position="59"/>
        <end position="74"/>
    </location>
</feature>
<feature type="helix" evidence="9">
    <location>
        <begin position="79"/>
        <end position="91"/>
    </location>
</feature>
<feature type="helix" evidence="9">
    <location>
        <begin position="96"/>
        <end position="109"/>
    </location>
</feature>
<feature type="helix" evidence="9">
    <location>
        <begin position="111"/>
        <end position="115"/>
    </location>
</feature>
<feature type="helix" evidence="9">
    <location>
        <begin position="123"/>
        <end position="125"/>
    </location>
</feature>
<feature type="helix" evidence="9">
    <location>
        <begin position="127"/>
        <end position="129"/>
    </location>
</feature>
<feature type="turn" evidence="9">
    <location>
        <begin position="146"/>
        <end position="148"/>
    </location>
</feature>
<feature type="helix" evidence="9">
    <location>
        <begin position="153"/>
        <end position="155"/>
    </location>
</feature>
<feature type="helix" evidence="9">
    <location>
        <begin position="156"/>
        <end position="159"/>
    </location>
</feature>
<feature type="helix" evidence="9">
    <location>
        <begin position="162"/>
        <end position="175"/>
    </location>
</feature>
<feature type="helix" evidence="9">
    <location>
        <begin position="192"/>
        <end position="213"/>
    </location>
</feature>
<feature type="helix" evidence="9">
    <location>
        <begin position="237"/>
        <end position="239"/>
    </location>
</feature>
<feature type="turn" evidence="9">
    <location>
        <begin position="240"/>
        <end position="242"/>
    </location>
</feature>
<feature type="turn" evidence="9">
    <location>
        <begin position="262"/>
        <end position="264"/>
    </location>
</feature>
<feature type="helix" evidence="9">
    <location>
        <begin position="270"/>
        <end position="286"/>
    </location>
</feature>
<feature type="strand" evidence="9">
    <location>
        <begin position="291"/>
        <end position="293"/>
    </location>
</feature>
<feature type="turn" evidence="9">
    <location>
        <begin position="302"/>
        <end position="304"/>
    </location>
</feature>
<feature type="helix" evidence="9">
    <location>
        <begin position="305"/>
        <end position="313"/>
    </location>
</feature>
<feature type="helix" evidence="9">
    <location>
        <begin position="317"/>
        <end position="321"/>
    </location>
</feature>
<feature type="strand" evidence="9">
    <location>
        <begin position="324"/>
        <end position="326"/>
    </location>
</feature>
<feature type="helix" evidence="9">
    <location>
        <begin position="331"/>
        <end position="334"/>
    </location>
</feature>
<feature type="helix" evidence="9">
    <location>
        <begin position="337"/>
        <end position="349"/>
    </location>
</feature>
<feature type="helix" evidence="9">
    <location>
        <begin position="369"/>
        <end position="371"/>
    </location>
</feature>
<feature type="helix" evidence="9">
    <location>
        <begin position="373"/>
        <end position="392"/>
    </location>
</feature>
<feature type="turn" evidence="9">
    <location>
        <begin position="397"/>
        <end position="400"/>
    </location>
</feature>
<feature type="strand" evidence="9">
    <location>
        <begin position="403"/>
        <end position="414"/>
    </location>
</feature>
<feature type="strand" evidence="8">
    <location>
        <begin position="418"/>
        <end position="420"/>
    </location>
</feature>
<feature type="strand" evidence="9">
    <location>
        <begin position="425"/>
        <end position="431"/>
    </location>
</feature>
<feature type="helix" evidence="9">
    <location>
        <begin position="435"/>
        <end position="437"/>
    </location>
</feature>
<feature type="strand" evidence="9">
    <location>
        <begin position="443"/>
        <end position="446"/>
    </location>
</feature>
<feature type="strand" evidence="9">
    <location>
        <begin position="449"/>
        <end position="457"/>
    </location>
</feature>
<feature type="strand" evidence="9">
    <location>
        <begin position="465"/>
        <end position="467"/>
    </location>
</feature>
<feature type="strand" evidence="9">
    <location>
        <begin position="469"/>
        <end position="479"/>
    </location>
</feature>
<feature type="helix" evidence="9">
    <location>
        <begin position="480"/>
        <end position="482"/>
    </location>
</feature>
<feature type="helix" evidence="9">
    <location>
        <begin position="486"/>
        <end position="488"/>
    </location>
</feature>
<feature type="strand" evidence="9">
    <location>
        <begin position="490"/>
        <end position="499"/>
    </location>
</feature>
<feature type="strand" evidence="9">
    <location>
        <begin position="501"/>
        <end position="503"/>
    </location>
</feature>
<feature type="strand" evidence="9">
    <location>
        <begin position="505"/>
        <end position="510"/>
    </location>
</feature>
<feature type="helix" evidence="9">
    <location>
        <begin position="511"/>
        <end position="513"/>
    </location>
</feature>
<feature type="strand" evidence="8">
    <location>
        <begin position="515"/>
        <end position="517"/>
    </location>
</feature>
<feature type="helix" evidence="9">
    <location>
        <begin position="522"/>
        <end position="524"/>
    </location>
</feature>
<feature type="helix" evidence="9">
    <location>
        <begin position="528"/>
        <end position="530"/>
    </location>
</feature>
<feature type="turn" evidence="8">
    <location>
        <begin position="531"/>
        <end position="533"/>
    </location>
</feature>
<feature type="helix" evidence="9">
    <location>
        <begin position="541"/>
        <end position="543"/>
    </location>
</feature>
<feature type="strand" evidence="9">
    <location>
        <begin position="553"/>
        <end position="562"/>
    </location>
</feature>
<feature type="turn" evidence="9">
    <location>
        <begin position="584"/>
        <end position="589"/>
    </location>
</feature>
<feature type="helix" evidence="9">
    <location>
        <begin position="593"/>
        <end position="596"/>
    </location>
</feature>
<feature type="strand" evidence="9">
    <location>
        <begin position="599"/>
        <end position="601"/>
    </location>
</feature>
<feature type="helix" evidence="9">
    <location>
        <begin position="605"/>
        <end position="608"/>
    </location>
</feature>
<feature type="turn" evidence="9">
    <location>
        <begin position="612"/>
        <end position="614"/>
    </location>
</feature>
<feature type="strand" evidence="9">
    <location>
        <begin position="618"/>
        <end position="626"/>
    </location>
</feature>
<accession>C8VJQ3</accession>
<accession>Q5AR52</accession>
<proteinExistence type="evidence at protein level"/>
<organism>
    <name type="scientific">Emericella nidulans (strain FGSC A4 / ATCC 38163 / CBS 112.46 / NRRL 194 / M139)</name>
    <name type="common">Aspergillus nidulans</name>
    <dbReference type="NCBI Taxonomy" id="227321"/>
    <lineage>
        <taxon>Eukaryota</taxon>
        <taxon>Fungi</taxon>
        <taxon>Dikarya</taxon>
        <taxon>Ascomycota</taxon>
        <taxon>Pezizomycotina</taxon>
        <taxon>Eurotiomycetes</taxon>
        <taxon>Eurotiomycetidae</taxon>
        <taxon>Eurotiales</taxon>
        <taxon>Aspergillaceae</taxon>
        <taxon>Aspergillus</taxon>
        <taxon>Aspergillus subgen. Nidulantes</taxon>
    </lineage>
</organism>
<protein>
    <recommendedName>
        <fullName evidence="4">Cyclopenase asqI</fullName>
        <ecNumber evidence="3">4.1.99.27</ecNumber>
    </recommendedName>
    <alternativeName>
        <fullName evidence="5">4'-methoxyviridicatin/aspoquinolone biosynthesis cluster protein asqI</fullName>
    </alternativeName>
    <alternativeName>
        <fullName evidence="4">Aspoquinolone biosynthesis protein I</fullName>
    </alternativeName>
</protein>
<keyword id="KW-0002">3D-structure</keyword>
<keyword id="KW-0456">Lyase</keyword>
<keyword id="KW-0479">Metal-binding</keyword>
<keyword id="KW-1185">Reference proteome</keyword>
<keyword id="KW-0862">Zinc</keyword>
<evidence type="ECO:0000269" key="1">
    <source>
    </source>
</evidence>
<evidence type="ECO:0000269" key="2">
    <source>
    </source>
</evidence>
<evidence type="ECO:0000269" key="3">
    <source>
    </source>
</evidence>
<evidence type="ECO:0000303" key="4">
    <source>
    </source>
</evidence>
<evidence type="ECO:0000305" key="5"/>
<evidence type="ECO:0007744" key="6">
    <source>
        <dbReference type="PDB" id="5YY2"/>
    </source>
</evidence>
<evidence type="ECO:0007744" key="7">
    <source>
        <dbReference type="PDB" id="5YY3"/>
    </source>
</evidence>
<evidence type="ECO:0007829" key="8">
    <source>
        <dbReference type="PDB" id="5YY2"/>
    </source>
</evidence>
<evidence type="ECO:0007829" key="9">
    <source>
        <dbReference type="PDB" id="5YY3"/>
    </source>
</evidence>
<sequence length="732" mass="83554">MTCTLRDLNSLLEICCRCPAHNPSTAFAPTTKVRVSSDVRGIFALPVQKDHKPYNGLSPEHLETMKAVSLMLDAAGPKLEDGISKAKELLEERINPELMRDALGIYLTHSKDAQQRKIFPPPLKNHPFFSTKTRRPANVAGEICTADTLHGHALLSYWRDDYDLNDSHYYWHMVYRGAGGDNSKNVGDFDRHGEVFLYVHSQMVARYETESLCWSLPLVRPWNQYDDFLENGYAPISSLIEHYGGYPPFSTWYSIRNPDMPDTLNVTIPRARLEEWRDNIYAAIRKGQFETTSKDKPLVLTRDNCLNFVGGILDAQYPSLNKLLGGCSLDEERYGNLHNYGLGKFAEMAYRNKPGEKSPYGLTISNFGAPRDPCFWRWYKHLQYYGRLAATRYPQDITAHRAEVVLSNLVVRLQDRSSPHYLDGHITTFLGPPAVNFMESKAKLGHEPYEWNVQVKSCRRSPPSKENPQTLTLRLFIAAEDLMNDYHSWIEMDRATVQLTDESAITKVRLDTDSSVARKMGNYGEPDPRYASAVFRHGWPQNLMLPVGKVEGMPFVAFCIATDDGIPDPAPAPPFHHYHDPRGMGYPFNRAWTQLTEDSTGKASIRTIISNAELYPFITSTTFKIYRTTKFETKQIIQPTTVTWFNTIRGYFKDADRACMRSEYGYDLYNYDHVMLHADAILDATASKRMPLQMGKYTQDNPDPEHPLWTVKMCENFRAWLLNGCPKGTDPA</sequence>
<dbReference type="EC" id="4.1.99.27" evidence="3"/>
<dbReference type="EMBL" id="AACD01000170">
    <property type="protein sequence ID" value="EAA61519.1"/>
    <property type="status" value="ALT_SEQ"/>
    <property type="molecule type" value="Genomic_DNA"/>
</dbReference>
<dbReference type="EMBL" id="BN001306">
    <property type="protein sequence ID" value="CBF82279.1"/>
    <property type="molecule type" value="Genomic_DNA"/>
</dbReference>
<dbReference type="PDB" id="5YY2">
    <property type="method" value="X-ray"/>
    <property type="resolution" value="2.91 A"/>
    <property type="chains" value="A=1-731"/>
</dbReference>
<dbReference type="PDB" id="5YY3">
    <property type="method" value="X-ray"/>
    <property type="resolution" value="2.31 A"/>
    <property type="chains" value="A=1-731"/>
</dbReference>
<dbReference type="PDBsum" id="5YY2"/>
<dbReference type="PDBsum" id="5YY3"/>
<dbReference type="SMR" id="C8VJQ3"/>
<dbReference type="STRING" id="227321.C8VJQ3"/>
<dbReference type="EnsemblFungi" id="CBF82279">
    <property type="protein sequence ID" value="CBF82279"/>
    <property type="gene ID" value="ANIA_11193"/>
</dbReference>
<dbReference type="VEuPathDB" id="FungiDB:AN11193"/>
<dbReference type="HOGENOM" id="CLU_378560_0_0_1"/>
<dbReference type="InParanoid" id="C8VJQ3"/>
<dbReference type="OMA" id="YYMHEQI"/>
<dbReference type="OrthoDB" id="8119704at2759"/>
<dbReference type="BioCyc" id="MetaCyc:MONOMER-124175"/>
<dbReference type="Proteomes" id="UP000000560">
    <property type="component" value="Chromosome VI"/>
</dbReference>
<dbReference type="GO" id="GO:0016829">
    <property type="term" value="F:lyase activity"/>
    <property type="evidence" value="ECO:0007669"/>
    <property type="project" value="UniProtKB-KW"/>
</dbReference>
<dbReference type="GO" id="GO:0046872">
    <property type="term" value="F:metal ion binding"/>
    <property type="evidence" value="ECO:0007669"/>
    <property type="project" value="UniProtKB-KW"/>
</dbReference>
<dbReference type="Gene3D" id="1.10.1280.10">
    <property type="entry name" value="Di-copper center containing domain from catechol oxidase"/>
    <property type="match status" value="1"/>
</dbReference>
<dbReference type="Gene3D" id="2.60.40.1520">
    <property type="entry name" value="Hemocyanin, C-terminal domain"/>
    <property type="match status" value="1"/>
</dbReference>
<dbReference type="InterPro" id="IPR008922">
    <property type="entry name" value="Di-copper_centre_dom_sf"/>
</dbReference>
<dbReference type="InterPro" id="IPR013788">
    <property type="entry name" value="Hemocyanin/hexamerin"/>
</dbReference>
<dbReference type="InterPro" id="IPR000896">
    <property type="entry name" value="Hemocyanin/hexamerin_mid_dom"/>
</dbReference>
<dbReference type="InterPro" id="IPR005203">
    <property type="entry name" value="Hemocyanin_C"/>
</dbReference>
<dbReference type="InterPro" id="IPR037020">
    <property type="entry name" value="Hemocyanin_C_sf"/>
</dbReference>
<dbReference type="InterPro" id="IPR014756">
    <property type="entry name" value="Ig_E-set"/>
</dbReference>
<dbReference type="PANTHER" id="PTHR11511">
    <property type="entry name" value="LARVAL STORAGE PROTEIN/PHENOLOXIDASE"/>
    <property type="match status" value="1"/>
</dbReference>
<dbReference type="PANTHER" id="PTHR11511:SF4">
    <property type="entry name" value="PHENOLOXIDASE 2-RELATED"/>
    <property type="match status" value="1"/>
</dbReference>
<dbReference type="Pfam" id="PF03723">
    <property type="entry name" value="Hemocyanin_C"/>
    <property type="match status" value="1"/>
</dbReference>
<dbReference type="Pfam" id="PF00372">
    <property type="entry name" value="Hemocyanin_M"/>
    <property type="match status" value="1"/>
</dbReference>
<dbReference type="PRINTS" id="PR00187">
    <property type="entry name" value="HAEMOCYANIN"/>
</dbReference>
<dbReference type="SUPFAM" id="SSF48056">
    <property type="entry name" value="Di-copper centre-containing domain"/>
    <property type="match status" value="1"/>
</dbReference>
<dbReference type="SUPFAM" id="SSF81296">
    <property type="entry name" value="E set domains"/>
    <property type="match status" value="1"/>
</dbReference>
<reference key="1">
    <citation type="journal article" date="2005" name="Nature">
        <title>Sequencing of Aspergillus nidulans and comparative analysis with A. fumigatus and A. oryzae.</title>
        <authorList>
            <person name="Galagan J.E."/>
            <person name="Calvo S.E."/>
            <person name="Cuomo C."/>
            <person name="Ma L.-J."/>
            <person name="Wortman J.R."/>
            <person name="Batzoglou S."/>
            <person name="Lee S.-I."/>
            <person name="Bastuerkmen M."/>
            <person name="Spevak C.C."/>
            <person name="Clutterbuck J."/>
            <person name="Kapitonov V."/>
            <person name="Jurka J."/>
            <person name="Scazzocchio C."/>
            <person name="Farman M.L."/>
            <person name="Butler J."/>
            <person name="Purcell S."/>
            <person name="Harris S."/>
            <person name="Braus G.H."/>
            <person name="Draht O."/>
            <person name="Busch S."/>
            <person name="D'Enfert C."/>
            <person name="Bouchier C."/>
            <person name="Goldman G.H."/>
            <person name="Bell-Pedersen D."/>
            <person name="Griffiths-Jones S."/>
            <person name="Doonan J.H."/>
            <person name="Yu J."/>
            <person name="Vienken K."/>
            <person name="Pain A."/>
            <person name="Freitag M."/>
            <person name="Selker E.U."/>
            <person name="Archer D.B."/>
            <person name="Penalva M.A."/>
            <person name="Oakley B.R."/>
            <person name="Momany M."/>
            <person name="Tanaka T."/>
            <person name="Kumagai T."/>
            <person name="Asai K."/>
            <person name="Machida M."/>
            <person name="Nierman W.C."/>
            <person name="Denning D.W."/>
            <person name="Caddick M.X."/>
            <person name="Hynes M."/>
            <person name="Paoletti M."/>
            <person name="Fischer R."/>
            <person name="Miller B.L."/>
            <person name="Dyer P.S."/>
            <person name="Sachs M.S."/>
            <person name="Osmani S.A."/>
            <person name="Birren B.W."/>
        </authorList>
    </citation>
    <scope>NUCLEOTIDE SEQUENCE [LARGE SCALE GENOMIC DNA]</scope>
    <source>
        <strain>FGSC A4 / ATCC 38163 / CBS 112.46 / NRRL 194 / M139</strain>
    </source>
</reference>
<reference key="2">
    <citation type="journal article" date="2009" name="Fungal Genet. Biol.">
        <title>The 2008 update of the Aspergillus nidulans genome annotation: a community effort.</title>
        <authorList>
            <person name="Wortman J.R."/>
            <person name="Gilsenan J.M."/>
            <person name="Joardar V."/>
            <person name="Deegan J."/>
            <person name="Clutterbuck J."/>
            <person name="Andersen M.R."/>
            <person name="Archer D."/>
            <person name="Bencina M."/>
            <person name="Braus G."/>
            <person name="Coutinho P."/>
            <person name="von Dohren H."/>
            <person name="Doonan J."/>
            <person name="Driessen A.J."/>
            <person name="Durek P."/>
            <person name="Espeso E."/>
            <person name="Fekete E."/>
            <person name="Flipphi M."/>
            <person name="Estrada C.G."/>
            <person name="Geysens S."/>
            <person name="Goldman G."/>
            <person name="de Groot P.W."/>
            <person name="Hansen K."/>
            <person name="Harris S.D."/>
            <person name="Heinekamp T."/>
            <person name="Helmstaedt K."/>
            <person name="Henrissat B."/>
            <person name="Hofmann G."/>
            <person name="Homan T."/>
            <person name="Horio T."/>
            <person name="Horiuchi H."/>
            <person name="James S."/>
            <person name="Jones M."/>
            <person name="Karaffa L."/>
            <person name="Karanyi Z."/>
            <person name="Kato M."/>
            <person name="Keller N."/>
            <person name="Kelly D.E."/>
            <person name="Kiel J.A."/>
            <person name="Kim J.M."/>
            <person name="van der Klei I.J."/>
            <person name="Klis F.M."/>
            <person name="Kovalchuk A."/>
            <person name="Krasevec N."/>
            <person name="Kubicek C.P."/>
            <person name="Liu B."/>
            <person name="Maccabe A."/>
            <person name="Meyer V."/>
            <person name="Mirabito P."/>
            <person name="Miskei M."/>
            <person name="Mos M."/>
            <person name="Mullins J."/>
            <person name="Nelson D.R."/>
            <person name="Nielsen J."/>
            <person name="Oakley B.R."/>
            <person name="Osmani S.A."/>
            <person name="Pakula T."/>
            <person name="Paszewski A."/>
            <person name="Paulsen I."/>
            <person name="Pilsyk S."/>
            <person name="Pocsi I."/>
            <person name="Punt P.J."/>
            <person name="Ram A.F."/>
            <person name="Ren Q."/>
            <person name="Robellet X."/>
            <person name="Robson G."/>
            <person name="Seiboth B."/>
            <person name="van Solingen P."/>
            <person name="Specht T."/>
            <person name="Sun J."/>
            <person name="Taheri-Talesh N."/>
            <person name="Takeshita N."/>
            <person name="Ussery D."/>
            <person name="vanKuyk P.A."/>
            <person name="Visser H."/>
            <person name="van de Vondervoort P.J."/>
            <person name="de Vries R.P."/>
            <person name="Walton J."/>
            <person name="Xiang X."/>
            <person name="Xiong Y."/>
            <person name="Zeng A.P."/>
            <person name="Brandt B.W."/>
            <person name="Cornell M.J."/>
            <person name="van den Hondel C.A."/>
            <person name="Visser J."/>
            <person name="Oliver S.G."/>
            <person name="Turner G."/>
        </authorList>
    </citation>
    <scope>GENOME REANNOTATION</scope>
    <source>
        <strain>FGSC A4 / ATCC 38163 / CBS 112.46 / NRRL 194 / M139</strain>
    </source>
</reference>
<reference key="3">
    <citation type="journal article" date="2014" name="Angew. Chem. Int. Ed.">
        <title>Non-heme dioxygenase catalyzes atypical oxidations of 6,7-bicyclic systems to form the 6,6-quinolone core of viridicatin-type fungal alkaloids.</title>
        <authorList>
            <person name="Ishikawa N."/>
            <person name="Tanaka H."/>
            <person name="Koyama F."/>
            <person name="Noguchi H."/>
            <person name="Wang C.C."/>
            <person name="Hotta K."/>
            <person name="Watanabe K."/>
        </authorList>
    </citation>
    <scope>FUNCTION</scope>
</reference>
<reference key="4">
    <citation type="journal article" date="2017" name="Nat. Chem. Biol.">
        <title>Enzyme-catalyzed cationic epoxide rearrangements in quinolone alkaloid biosynthesis.</title>
        <authorList>
            <person name="Zou Y."/>
            <person name="Garcia-Borras M."/>
            <person name="Tang M.C."/>
            <person name="Hirayama Y."/>
            <person name="Li D.H."/>
            <person name="Li L."/>
            <person name="Watanabe K."/>
            <person name="Houk K.N."/>
            <person name="Tang Y."/>
        </authorList>
    </citation>
    <scope>GENE MODEL REVISION</scope>
</reference>
<reference evidence="6 7" key="5">
    <citation type="journal article" date="2018" name="Nat. Commun.">
        <title>Enzymatic one-step ring contraction for quinolone biosynthesis.</title>
        <authorList>
            <person name="Kishimoto S."/>
            <person name="Hara K."/>
            <person name="Hashimoto H."/>
            <person name="Hirayama Y."/>
            <person name="Champagne P.A."/>
            <person name="Houk K.N."/>
            <person name="Tang Y."/>
            <person name="Watanabe K."/>
        </authorList>
    </citation>
    <scope>X-RAY CRYSTALLOGRAPHY (2.31 ANGSTROMS) OF 1-731 IN COMPLEX WITH ZINC</scope>
    <scope>FUNCTION</scope>
    <scope>CATALYTIC ACTIVITY</scope>
    <scope>BIOPHYSICOCHEMICAL PROPERTIES</scope>
    <scope>COFACTOR</scope>
    <scope>PATHWAY</scope>
    <scope>MUTAGENESIS OF HIS-168; HIS-172; ARG-176; HIS-200; ASP-314; HIS-338 AND ASN-339</scope>
</reference>
<name>ASQI_EMENI</name>